<dbReference type="EC" id="5.4.2.10" evidence="1"/>
<dbReference type="EMBL" id="CP000806">
    <property type="protein sequence ID" value="ACB50058.1"/>
    <property type="molecule type" value="Genomic_DNA"/>
</dbReference>
<dbReference type="RefSeq" id="WP_009545950.1">
    <property type="nucleotide sequence ID" value="NC_010546.1"/>
</dbReference>
<dbReference type="SMR" id="B1WR00"/>
<dbReference type="STRING" id="43989.cce_0707"/>
<dbReference type="KEGG" id="cyt:cce_0707"/>
<dbReference type="eggNOG" id="COG1109">
    <property type="taxonomic scope" value="Bacteria"/>
</dbReference>
<dbReference type="HOGENOM" id="CLU_016950_7_0_3"/>
<dbReference type="OrthoDB" id="9806956at2"/>
<dbReference type="Proteomes" id="UP000001203">
    <property type="component" value="Chromosome circular"/>
</dbReference>
<dbReference type="GO" id="GO:0005829">
    <property type="term" value="C:cytosol"/>
    <property type="evidence" value="ECO:0007669"/>
    <property type="project" value="TreeGrafter"/>
</dbReference>
<dbReference type="GO" id="GO:0000287">
    <property type="term" value="F:magnesium ion binding"/>
    <property type="evidence" value="ECO:0007669"/>
    <property type="project" value="UniProtKB-UniRule"/>
</dbReference>
<dbReference type="GO" id="GO:0008966">
    <property type="term" value="F:phosphoglucosamine mutase activity"/>
    <property type="evidence" value="ECO:0007669"/>
    <property type="project" value="UniProtKB-UniRule"/>
</dbReference>
<dbReference type="GO" id="GO:0004615">
    <property type="term" value="F:phosphomannomutase activity"/>
    <property type="evidence" value="ECO:0007669"/>
    <property type="project" value="TreeGrafter"/>
</dbReference>
<dbReference type="GO" id="GO:0005975">
    <property type="term" value="P:carbohydrate metabolic process"/>
    <property type="evidence" value="ECO:0007669"/>
    <property type="project" value="InterPro"/>
</dbReference>
<dbReference type="GO" id="GO:0009252">
    <property type="term" value="P:peptidoglycan biosynthetic process"/>
    <property type="evidence" value="ECO:0007669"/>
    <property type="project" value="TreeGrafter"/>
</dbReference>
<dbReference type="GO" id="GO:0006048">
    <property type="term" value="P:UDP-N-acetylglucosamine biosynthetic process"/>
    <property type="evidence" value="ECO:0007669"/>
    <property type="project" value="TreeGrafter"/>
</dbReference>
<dbReference type="CDD" id="cd05802">
    <property type="entry name" value="GlmM"/>
    <property type="match status" value="1"/>
</dbReference>
<dbReference type="FunFam" id="3.30.310.50:FF:000001">
    <property type="entry name" value="Phosphoglucosamine mutase"/>
    <property type="match status" value="1"/>
</dbReference>
<dbReference type="FunFam" id="3.40.120.10:FF:000001">
    <property type="entry name" value="Phosphoglucosamine mutase"/>
    <property type="match status" value="1"/>
</dbReference>
<dbReference type="FunFam" id="3.40.120.10:FF:000002">
    <property type="entry name" value="Phosphoglucosamine mutase"/>
    <property type="match status" value="1"/>
</dbReference>
<dbReference type="Gene3D" id="3.40.120.10">
    <property type="entry name" value="Alpha-D-Glucose-1,6-Bisphosphate, subunit A, domain 3"/>
    <property type="match status" value="3"/>
</dbReference>
<dbReference type="Gene3D" id="3.30.310.50">
    <property type="entry name" value="Alpha-D-phosphohexomutase, C-terminal domain"/>
    <property type="match status" value="1"/>
</dbReference>
<dbReference type="HAMAP" id="MF_01554_B">
    <property type="entry name" value="GlmM_B"/>
    <property type="match status" value="1"/>
</dbReference>
<dbReference type="InterPro" id="IPR005844">
    <property type="entry name" value="A-D-PHexomutase_a/b/a-I"/>
</dbReference>
<dbReference type="InterPro" id="IPR016055">
    <property type="entry name" value="A-D-PHexomutase_a/b/a-I/II/III"/>
</dbReference>
<dbReference type="InterPro" id="IPR005845">
    <property type="entry name" value="A-D-PHexomutase_a/b/a-II"/>
</dbReference>
<dbReference type="InterPro" id="IPR005846">
    <property type="entry name" value="A-D-PHexomutase_a/b/a-III"/>
</dbReference>
<dbReference type="InterPro" id="IPR005843">
    <property type="entry name" value="A-D-PHexomutase_C"/>
</dbReference>
<dbReference type="InterPro" id="IPR036900">
    <property type="entry name" value="A-D-PHexomutase_C_sf"/>
</dbReference>
<dbReference type="InterPro" id="IPR016066">
    <property type="entry name" value="A-D-PHexomutase_CS"/>
</dbReference>
<dbReference type="InterPro" id="IPR005841">
    <property type="entry name" value="Alpha-D-phosphohexomutase_SF"/>
</dbReference>
<dbReference type="InterPro" id="IPR006352">
    <property type="entry name" value="GlmM_bact"/>
</dbReference>
<dbReference type="InterPro" id="IPR050060">
    <property type="entry name" value="Phosphoglucosamine_mutase"/>
</dbReference>
<dbReference type="NCBIfam" id="TIGR01455">
    <property type="entry name" value="glmM"/>
    <property type="match status" value="1"/>
</dbReference>
<dbReference type="PANTHER" id="PTHR42946:SF1">
    <property type="entry name" value="PHOSPHOGLUCOMUTASE (ALPHA-D-GLUCOSE-1,6-BISPHOSPHATE-DEPENDENT)"/>
    <property type="match status" value="1"/>
</dbReference>
<dbReference type="PANTHER" id="PTHR42946">
    <property type="entry name" value="PHOSPHOHEXOSE MUTASE"/>
    <property type="match status" value="1"/>
</dbReference>
<dbReference type="Pfam" id="PF02878">
    <property type="entry name" value="PGM_PMM_I"/>
    <property type="match status" value="1"/>
</dbReference>
<dbReference type="Pfam" id="PF02879">
    <property type="entry name" value="PGM_PMM_II"/>
    <property type="match status" value="1"/>
</dbReference>
<dbReference type="Pfam" id="PF02880">
    <property type="entry name" value="PGM_PMM_III"/>
    <property type="match status" value="1"/>
</dbReference>
<dbReference type="Pfam" id="PF00408">
    <property type="entry name" value="PGM_PMM_IV"/>
    <property type="match status" value="1"/>
</dbReference>
<dbReference type="PRINTS" id="PR00509">
    <property type="entry name" value="PGMPMM"/>
</dbReference>
<dbReference type="SUPFAM" id="SSF55957">
    <property type="entry name" value="Phosphoglucomutase, C-terminal domain"/>
    <property type="match status" value="1"/>
</dbReference>
<dbReference type="SUPFAM" id="SSF53738">
    <property type="entry name" value="Phosphoglucomutase, first 3 domains"/>
    <property type="match status" value="3"/>
</dbReference>
<dbReference type="PROSITE" id="PS00710">
    <property type="entry name" value="PGM_PMM"/>
    <property type="match status" value="1"/>
</dbReference>
<evidence type="ECO:0000255" key="1">
    <source>
        <dbReference type="HAMAP-Rule" id="MF_01554"/>
    </source>
</evidence>
<name>GLMM_CROS5</name>
<reference key="1">
    <citation type="journal article" date="2008" name="Proc. Natl. Acad. Sci. U.S.A.">
        <title>The genome of Cyanothece 51142, a unicellular diazotrophic cyanobacterium important in the marine nitrogen cycle.</title>
        <authorList>
            <person name="Welsh E.A."/>
            <person name="Liberton M."/>
            <person name="Stoeckel J."/>
            <person name="Loh T."/>
            <person name="Elvitigala T."/>
            <person name="Wang C."/>
            <person name="Wollam A."/>
            <person name="Fulton R.S."/>
            <person name="Clifton S.W."/>
            <person name="Jacobs J.M."/>
            <person name="Aurora R."/>
            <person name="Ghosh B.K."/>
            <person name="Sherman L.A."/>
            <person name="Smith R.D."/>
            <person name="Wilson R.K."/>
            <person name="Pakrasi H.B."/>
        </authorList>
    </citation>
    <scope>NUCLEOTIDE SEQUENCE [LARGE SCALE GENOMIC DNA]</scope>
    <source>
        <strain>ATCC 51142 / BH68</strain>
    </source>
</reference>
<gene>
    <name evidence="1" type="primary">glmM</name>
    <name type="ordered locus">cce_0707</name>
</gene>
<protein>
    <recommendedName>
        <fullName evidence="1">Phosphoglucosamine mutase</fullName>
        <ecNumber evidence="1">5.4.2.10</ecNumber>
    </recommendedName>
</protein>
<accession>B1WR00</accession>
<organism>
    <name type="scientific">Crocosphaera subtropica (strain ATCC 51142 / BH68)</name>
    <name type="common">Cyanothece sp. (strain ATCC 51142)</name>
    <dbReference type="NCBI Taxonomy" id="43989"/>
    <lineage>
        <taxon>Bacteria</taxon>
        <taxon>Bacillati</taxon>
        <taxon>Cyanobacteriota</taxon>
        <taxon>Cyanophyceae</taxon>
        <taxon>Oscillatoriophycideae</taxon>
        <taxon>Chroococcales</taxon>
        <taxon>Aphanothecaceae</taxon>
        <taxon>Crocosphaera</taxon>
        <taxon>Crocosphaera subtropica</taxon>
    </lineage>
</organism>
<sequence>MVISLSPNGSGRLNHQTTNLSNSLLTTLPYLPNSPLFGTDGIRGKAGELLTAPFALQLGFWAGQVLKSKTTTPGPVMIGQDSRNSSDMLAMAMAAGLTSAGLEVWQLGLCPTPCVAYLTRHSEAIAGIMISASHNPPEDNGIKFFNTDGTKLSSSLGQEIEDGLRGNLLLSVDEIAAWGKILYEPTLVNTYCQFLQDSLPPSLSCQGMKIVLDLAWGASVNVAPAMFKALGAEVICLHETANGDRINVNCGSTHLHVLQAAIQEHQADMGFAFDGDADRVMAVDSTGKVVDGDYILYLWGKSLLERGNLPNNLLIGTVMANLGFERAWQGLGGQLVRTSVGDRYVQSQMWETGAMLGGEQSGHIICHHYGVSGDGVQTALHLAALVHESGVSLAELVKNSFDTYPQILRNVRLEDREKLRYWQECQPLQQAIAQAEVGMGETGRVLVRASGTEPLIRVMVESECPDAANYWVNYLVGIVETHLAV</sequence>
<comment type="function">
    <text evidence="1">Catalyzes the conversion of glucosamine-6-phosphate to glucosamine-1-phosphate.</text>
</comment>
<comment type="catalytic activity">
    <reaction evidence="1">
        <text>alpha-D-glucosamine 1-phosphate = D-glucosamine 6-phosphate</text>
        <dbReference type="Rhea" id="RHEA:23424"/>
        <dbReference type="ChEBI" id="CHEBI:58516"/>
        <dbReference type="ChEBI" id="CHEBI:58725"/>
        <dbReference type="EC" id="5.4.2.10"/>
    </reaction>
</comment>
<comment type="cofactor">
    <cofactor evidence="1">
        <name>Mg(2+)</name>
        <dbReference type="ChEBI" id="CHEBI:18420"/>
    </cofactor>
    <text evidence="1">Binds 1 Mg(2+) ion per subunit.</text>
</comment>
<comment type="PTM">
    <text evidence="1">Activated by phosphorylation.</text>
</comment>
<comment type="similarity">
    <text evidence="1">Belongs to the phosphohexose mutase family.</text>
</comment>
<proteinExistence type="inferred from homology"/>
<keyword id="KW-0413">Isomerase</keyword>
<keyword id="KW-0460">Magnesium</keyword>
<keyword id="KW-0479">Metal-binding</keyword>
<keyword id="KW-0597">Phosphoprotein</keyword>
<keyword id="KW-1185">Reference proteome</keyword>
<feature type="chain" id="PRO_1000185363" description="Phosphoglucosamine mutase">
    <location>
        <begin position="1"/>
        <end position="485"/>
    </location>
</feature>
<feature type="active site" description="Phosphoserine intermediate" evidence="1">
    <location>
        <position position="133"/>
    </location>
</feature>
<feature type="binding site" description="via phosphate group" evidence="1">
    <location>
        <position position="133"/>
    </location>
    <ligand>
        <name>Mg(2+)</name>
        <dbReference type="ChEBI" id="CHEBI:18420"/>
    </ligand>
</feature>
<feature type="binding site" evidence="1">
    <location>
        <position position="274"/>
    </location>
    <ligand>
        <name>Mg(2+)</name>
        <dbReference type="ChEBI" id="CHEBI:18420"/>
    </ligand>
</feature>
<feature type="binding site" evidence="1">
    <location>
        <position position="276"/>
    </location>
    <ligand>
        <name>Mg(2+)</name>
        <dbReference type="ChEBI" id="CHEBI:18420"/>
    </ligand>
</feature>
<feature type="binding site" evidence="1">
    <location>
        <position position="278"/>
    </location>
    <ligand>
        <name>Mg(2+)</name>
        <dbReference type="ChEBI" id="CHEBI:18420"/>
    </ligand>
</feature>
<feature type="modified residue" description="Phosphoserine" evidence="1">
    <location>
        <position position="133"/>
    </location>
</feature>